<evidence type="ECO:0000250" key="1"/>
<evidence type="ECO:0000255" key="2">
    <source>
        <dbReference type="PROSITE-ProRule" id="PRU10007"/>
    </source>
</evidence>
<evidence type="ECO:0000255" key="3">
    <source>
        <dbReference type="PROSITE-ProRule" id="PRU10008"/>
    </source>
</evidence>
<evidence type="ECO:0000269" key="4">
    <source>
    </source>
</evidence>
<evidence type="ECO:0000305" key="5"/>
<keyword id="KW-0963">Cytoplasm</keyword>
<keyword id="KW-0903">Direct protein sequencing</keyword>
<keyword id="KW-0521">NADP</keyword>
<keyword id="KW-0560">Oxidoreductase</keyword>
<gene>
    <name type="primary">GAPN</name>
</gene>
<accession>P81406</accession>
<accession>Q53WX1</accession>
<name>GAPN_PEA</name>
<organism>
    <name type="scientific">Pisum sativum</name>
    <name type="common">Garden pea</name>
    <name type="synonym">Lathyrus oleraceus</name>
    <dbReference type="NCBI Taxonomy" id="3888"/>
    <lineage>
        <taxon>Eukaryota</taxon>
        <taxon>Viridiplantae</taxon>
        <taxon>Streptophyta</taxon>
        <taxon>Embryophyta</taxon>
        <taxon>Tracheophyta</taxon>
        <taxon>Spermatophyta</taxon>
        <taxon>Magnoliopsida</taxon>
        <taxon>eudicotyledons</taxon>
        <taxon>Gunneridae</taxon>
        <taxon>Pentapetalae</taxon>
        <taxon>rosids</taxon>
        <taxon>fabids</taxon>
        <taxon>Fabales</taxon>
        <taxon>Fabaceae</taxon>
        <taxon>Papilionoideae</taxon>
        <taxon>50 kb inversion clade</taxon>
        <taxon>NPAAA clade</taxon>
        <taxon>Hologalegina</taxon>
        <taxon>IRL clade</taxon>
        <taxon>Fabeae</taxon>
        <taxon>Pisum</taxon>
    </lineage>
</organism>
<dbReference type="EC" id="1.2.1.9"/>
<dbReference type="EMBL" id="U34988">
    <property type="protein sequence ID" value="AAO38512.1"/>
    <property type="molecule type" value="Genomic_DNA"/>
</dbReference>
<dbReference type="EMBL" id="X75327">
    <property type="protein sequence ID" value="CAA53076.1"/>
    <property type="molecule type" value="mRNA"/>
</dbReference>
<dbReference type="PIR" id="S43832">
    <property type="entry name" value="S43832"/>
</dbReference>
<dbReference type="SMR" id="P81406"/>
<dbReference type="EnsemblPlants" id="Psat4g008600.1">
    <property type="protein sequence ID" value="Psat4g008600.1.cds"/>
    <property type="gene ID" value="Psat4g008600"/>
</dbReference>
<dbReference type="Gramene" id="Psat4g008600.1">
    <property type="protein sequence ID" value="Psat4g008600.1.cds"/>
    <property type="gene ID" value="Psat4g008600"/>
</dbReference>
<dbReference type="OrthoDB" id="310895at2759"/>
<dbReference type="SABIO-RK" id="P81406"/>
<dbReference type="GO" id="GO:0005737">
    <property type="term" value="C:cytoplasm"/>
    <property type="evidence" value="ECO:0007669"/>
    <property type="project" value="UniProtKB-SubCell"/>
</dbReference>
<dbReference type="GO" id="GO:0008886">
    <property type="term" value="F:glyceraldehyde-3-phosphate dehydrogenase (NADP+) (non-phosphorylating) activity"/>
    <property type="evidence" value="ECO:0007669"/>
    <property type="project" value="UniProtKB-EC"/>
</dbReference>
<dbReference type="GO" id="GO:0008911">
    <property type="term" value="F:lactaldehyde dehydrogenase (NAD+) activity"/>
    <property type="evidence" value="ECO:0007669"/>
    <property type="project" value="TreeGrafter"/>
</dbReference>
<dbReference type="CDD" id="cd07082">
    <property type="entry name" value="ALDH_F11_NP-GAPDH"/>
    <property type="match status" value="1"/>
</dbReference>
<dbReference type="FunFam" id="3.40.309.10:FF:000016">
    <property type="entry name" value="NADP-dependent glyceraldehyde-3-phosphate dehydrogenase"/>
    <property type="match status" value="1"/>
</dbReference>
<dbReference type="FunFam" id="3.40.605.10:FF:000013">
    <property type="entry name" value="NADP-dependent glyceraldehyde-3-phosphate dehydrogenase"/>
    <property type="match status" value="1"/>
</dbReference>
<dbReference type="Gene3D" id="3.40.605.10">
    <property type="entry name" value="Aldehyde Dehydrogenase, Chain A, domain 1"/>
    <property type="match status" value="1"/>
</dbReference>
<dbReference type="Gene3D" id="3.40.309.10">
    <property type="entry name" value="Aldehyde Dehydrogenase, Chain A, domain 2"/>
    <property type="match status" value="1"/>
</dbReference>
<dbReference type="InterPro" id="IPR016161">
    <property type="entry name" value="Ald_DH/histidinol_DH"/>
</dbReference>
<dbReference type="InterPro" id="IPR016163">
    <property type="entry name" value="Ald_DH_C"/>
</dbReference>
<dbReference type="InterPro" id="IPR016160">
    <property type="entry name" value="Ald_DH_CS_CYS"/>
</dbReference>
<dbReference type="InterPro" id="IPR029510">
    <property type="entry name" value="Ald_DH_CS_GLU"/>
</dbReference>
<dbReference type="InterPro" id="IPR016162">
    <property type="entry name" value="Ald_DH_N"/>
</dbReference>
<dbReference type="InterPro" id="IPR015590">
    <property type="entry name" value="Aldehyde_DH_dom"/>
</dbReference>
<dbReference type="InterPro" id="IPR051020">
    <property type="entry name" value="ALDH-related_metabolic_enz"/>
</dbReference>
<dbReference type="PANTHER" id="PTHR42991">
    <property type="entry name" value="ALDEHYDE DEHYDROGENASE"/>
    <property type="match status" value="1"/>
</dbReference>
<dbReference type="PANTHER" id="PTHR42991:SF1">
    <property type="entry name" value="ALDEHYDE DEHYDROGENASE"/>
    <property type="match status" value="1"/>
</dbReference>
<dbReference type="Pfam" id="PF00171">
    <property type="entry name" value="Aldedh"/>
    <property type="match status" value="1"/>
</dbReference>
<dbReference type="SUPFAM" id="SSF53720">
    <property type="entry name" value="ALDH-like"/>
    <property type="match status" value="1"/>
</dbReference>
<dbReference type="PROSITE" id="PS00070">
    <property type="entry name" value="ALDEHYDE_DEHYDR_CYS"/>
    <property type="match status" value="1"/>
</dbReference>
<dbReference type="PROSITE" id="PS00687">
    <property type="entry name" value="ALDEHYDE_DEHYDR_GLU"/>
    <property type="match status" value="1"/>
</dbReference>
<protein>
    <recommendedName>
        <fullName>NADP-dependent glyceraldehyde-3-phosphate dehydrogenase</fullName>
        <ecNumber>1.2.1.9</ecNumber>
    </recommendedName>
    <alternativeName>
        <fullName>Glyceraldehyde-3-phosphate dehydrogenase [NADP(+)]</fullName>
    </alternativeName>
    <alternativeName>
        <fullName>Non-phosphorylating glyceraldehyde 3-phosphate dehydrogenase</fullName>
    </alternativeName>
    <alternativeName>
        <fullName>Triosephosphate dehydrogenase</fullName>
    </alternativeName>
</protein>
<proteinExistence type="evidence at protein level"/>
<feature type="chain" id="PRO_0000056578" description="NADP-dependent glyceraldehyde-3-phosphate dehydrogenase">
    <location>
        <begin position="1"/>
        <end position="496"/>
    </location>
</feature>
<feature type="active site" description="Proton acceptor" evidence="2 3">
    <location>
        <position position="264"/>
    </location>
</feature>
<feature type="active site" description="Nucleophile">
    <location>
        <position position="298"/>
    </location>
</feature>
<feature type="binding site" evidence="1">
    <location>
        <position position="116"/>
    </location>
    <ligand>
        <name>substrate</name>
    </ligand>
</feature>
<feature type="binding site" evidence="1">
    <location>
        <begin position="169"/>
        <end position="170"/>
    </location>
    <ligand>
        <name>substrate</name>
    </ligand>
</feature>
<feature type="binding site" evidence="1">
    <location>
        <position position="192"/>
    </location>
    <ligand>
        <name>NADP(+)</name>
        <dbReference type="ChEBI" id="CHEBI:58349"/>
    </ligand>
</feature>
<feature type="binding site" evidence="1">
    <location>
        <position position="195"/>
    </location>
    <ligand>
        <name>NADP(+)</name>
        <dbReference type="ChEBI" id="CHEBI:58349"/>
    </ligand>
</feature>
<feature type="binding site" evidence="1">
    <location>
        <position position="230"/>
    </location>
    <ligand>
        <name>NADP(+)</name>
        <dbReference type="ChEBI" id="CHEBI:58349"/>
    </ligand>
</feature>
<feature type="binding site" evidence="1">
    <location>
        <begin position="245"/>
        <end position="249"/>
    </location>
    <ligand>
        <name>NAD(+)</name>
        <dbReference type="ChEBI" id="CHEBI:57540"/>
    </ligand>
</feature>
<feature type="binding site" evidence="1">
    <location>
        <begin position="297"/>
        <end position="299"/>
    </location>
    <ligand>
        <name>substrate</name>
    </ligand>
</feature>
<feature type="binding site" evidence="1">
    <location>
        <position position="391"/>
    </location>
    <ligand>
        <name>NADP(+)</name>
        <dbReference type="ChEBI" id="CHEBI:58349"/>
    </ligand>
</feature>
<feature type="binding site" evidence="1">
    <location>
        <position position="451"/>
    </location>
    <ligand>
        <name>substrate</name>
    </ligand>
</feature>
<feature type="site" description="Transition state stabilizer" evidence="1">
    <location>
        <position position="169"/>
    </location>
</feature>
<reference key="1">
    <citation type="journal article" date="1994" name="J. Mol. Biol.">
        <title>Non-phosphorylating GAPDH of higher plants is a member of the aldehyde dehydrogenase superfamily with no sequence homology to phosphorylating GAPDH.</title>
        <authorList>
            <person name="Habenicht A."/>
            <person name="Hellman U."/>
            <person name="Cerff R."/>
        </authorList>
    </citation>
    <scope>NUCLEOTIDE SEQUENCE [GENOMIC DNA / MRNA]</scope>
    <scope>PARTIAL PROTEIN SEQUENCE</scope>
    <source>
        <strain>cv. Rosakrone</strain>
        <tissue>Shoot</tissue>
    </source>
</reference>
<reference key="2">
    <citation type="submission" date="2003-02" db="EMBL/GenBank/DDBJ databases">
        <title>First genomic cloning and characterization of the non-phosphorylating glyceraldehyde-3-phosphate dehydrogenase from higher plants.</title>
        <authorList>
            <person name="Habenicht A."/>
            <person name="Weile H."/>
            <person name="Cerff R."/>
        </authorList>
    </citation>
    <scope>NUCLEOTIDE SEQUENCE [GENOMIC DNA]</scope>
</reference>
<reference key="3">
    <citation type="journal article" date="1997" name="Biol. Chem.">
        <title>The non-phosphorylating glyceraldehyde-3-phosphate dehydrogenase: biochemistry, structure, occurrence and evolution.</title>
        <authorList>
            <person name="Habenicht A."/>
        </authorList>
    </citation>
    <scope>CHARACTERIZATION</scope>
</reference>
<reference key="4">
    <citation type="journal article" date="1999" name="FEBS Lett.">
        <title>Engineering a central metabolic pathway: glycolysis with no net phosphorylation in an Escherichia coli gap mutant complemented with a plant GapN gene.</title>
        <authorList>
            <person name="Valverde F."/>
            <person name="Losada M."/>
            <person name="Serrano A."/>
        </authorList>
    </citation>
    <scope>FUNCTION</scope>
</reference>
<sequence>MAATGVLAEIIDGDVYKYYADGEWKKSTSGKSVAIINPTTRKPQYKVQACSQEEVNKVMDSAKSAQKSWAKTPLWKRAELLHKAAAILKEHKAAIAECLVKEIAKPAKDAVTEVVRSGDLVSYCAEEGVRILGEGKFLVSDSFPGNERTKYCLTSKIPLGVILAIPPFNYPVNLAVSKIAPALIAGNSIVLKPPTQGAVAALHMVHCFHLAGFPKGLISCVTGKGSEIGDFLTMHPGVNCISFTGGDTGIAISKKSGMIPLQMELGGKDACIVLEDADLDLVAANIIKGGFSYSGQRCTAVKVVLVMESVADALVEKVKVKVAKLSVGPPEDDSDITPVVSESSANFIEGLVNDAKEKGATFCQEYKREGNLIWPLLLDNVRPDMRIAWEEPFGPVLPVIRINSVEEGIHHCNASNFGLQGCVFTKDINKAIMISDAMESGTVQINSAPARGPDHFPFQGIKDSGIGSQGITNSINMMTKVKTTVINLPSPSYTMG</sequence>
<comment type="function">
    <text evidence="4">Important as a means of generating NADPH for biosynthetic reactions.</text>
</comment>
<comment type="catalytic activity">
    <reaction>
        <text>D-glyceraldehyde 3-phosphate + NADP(+) + H2O = (2R)-3-phosphoglycerate + NADPH + 2 H(+)</text>
        <dbReference type="Rhea" id="RHEA:14669"/>
        <dbReference type="ChEBI" id="CHEBI:15377"/>
        <dbReference type="ChEBI" id="CHEBI:15378"/>
        <dbReference type="ChEBI" id="CHEBI:57783"/>
        <dbReference type="ChEBI" id="CHEBI:58272"/>
        <dbReference type="ChEBI" id="CHEBI:58349"/>
        <dbReference type="ChEBI" id="CHEBI:59776"/>
        <dbReference type="EC" id="1.2.1.9"/>
    </reaction>
</comment>
<comment type="subcellular location">
    <subcellularLocation>
        <location>Cytoplasm</location>
    </subcellularLocation>
</comment>
<comment type="similarity">
    <text evidence="5">Belongs to the aldehyde dehydrogenase family.</text>
</comment>